<reference key="1">
    <citation type="journal article" date="1993" name="FEBS Lett.">
        <title>The primary structure of carboxypeptidase S1 from Penicillium janthinellum.</title>
        <authorList>
            <person name="Svendsen I."/>
            <person name="Hofmann T."/>
            <person name="Endrizzi J."/>
            <person name="Remington S.J."/>
            <person name="Breddam K."/>
        </authorList>
    </citation>
    <scope>PROTEIN SEQUENCE</scope>
</reference>
<dbReference type="EC" id="3.4.16.6"/>
<dbReference type="PIR" id="S38953">
    <property type="entry name" value="S38953"/>
</dbReference>
<dbReference type="SMR" id="P34946"/>
<dbReference type="ESTHER" id="penja-cps1">
    <property type="family name" value="Carboxypeptidase_S10"/>
</dbReference>
<dbReference type="MEROPS" id="S10.008"/>
<dbReference type="GO" id="GO:0000324">
    <property type="term" value="C:fungal-type vacuole"/>
    <property type="evidence" value="ECO:0007669"/>
    <property type="project" value="TreeGrafter"/>
</dbReference>
<dbReference type="GO" id="GO:0004185">
    <property type="term" value="F:serine-type carboxypeptidase activity"/>
    <property type="evidence" value="ECO:0007669"/>
    <property type="project" value="UniProtKB-EC"/>
</dbReference>
<dbReference type="GO" id="GO:0017000">
    <property type="term" value="P:antibiotic biosynthetic process"/>
    <property type="evidence" value="ECO:0007669"/>
    <property type="project" value="UniProtKB-ARBA"/>
</dbReference>
<dbReference type="GO" id="GO:0072330">
    <property type="term" value="P:monocarboxylic acid biosynthetic process"/>
    <property type="evidence" value="ECO:0007669"/>
    <property type="project" value="UniProtKB-ARBA"/>
</dbReference>
<dbReference type="GO" id="GO:0006508">
    <property type="term" value="P:proteolysis"/>
    <property type="evidence" value="ECO:0007669"/>
    <property type="project" value="UniProtKB-KW"/>
</dbReference>
<dbReference type="Gene3D" id="1.10.287.410">
    <property type="match status" value="1"/>
</dbReference>
<dbReference type="Gene3D" id="3.40.50.1820">
    <property type="entry name" value="alpha/beta hydrolase"/>
    <property type="match status" value="1"/>
</dbReference>
<dbReference type="InterPro" id="IPR029058">
    <property type="entry name" value="AB_hydrolase_fold"/>
</dbReference>
<dbReference type="InterPro" id="IPR001563">
    <property type="entry name" value="Peptidase_S10"/>
</dbReference>
<dbReference type="InterPro" id="IPR033124">
    <property type="entry name" value="Ser_caboxypep_his_AS"/>
</dbReference>
<dbReference type="InterPro" id="IPR018202">
    <property type="entry name" value="Ser_caboxypep_ser_AS"/>
</dbReference>
<dbReference type="PANTHER" id="PTHR11802:SF453">
    <property type="entry name" value="S1, PUTATIVE-RELATED"/>
    <property type="match status" value="1"/>
</dbReference>
<dbReference type="PANTHER" id="PTHR11802">
    <property type="entry name" value="SERINE PROTEASE FAMILY S10 SERINE CARBOXYPEPTIDASE"/>
    <property type="match status" value="1"/>
</dbReference>
<dbReference type="Pfam" id="PF00450">
    <property type="entry name" value="Peptidase_S10"/>
    <property type="match status" value="1"/>
</dbReference>
<dbReference type="PRINTS" id="PR00724">
    <property type="entry name" value="CRBOXYPTASEC"/>
</dbReference>
<dbReference type="SUPFAM" id="SSF53474">
    <property type="entry name" value="alpha/beta-Hydrolases"/>
    <property type="match status" value="1"/>
</dbReference>
<dbReference type="PROSITE" id="PS00560">
    <property type="entry name" value="CARBOXYPEPT_SER_HIS"/>
    <property type="match status" value="1"/>
</dbReference>
<dbReference type="PROSITE" id="PS00131">
    <property type="entry name" value="CARBOXYPEPT_SER_SER"/>
    <property type="match status" value="1"/>
</dbReference>
<organism>
    <name type="scientific">Penicillium janthinellum</name>
    <name type="common">Penicillium vitale</name>
    <dbReference type="NCBI Taxonomy" id="5079"/>
    <lineage>
        <taxon>Eukaryota</taxon>
        <taxon>Fungi</taxon>
        <taxon>Dikarya</taxon>
        <taxon>Ascomycota</taxon>
        <taxon>Pezizomycotina</taxon>
        <taxon>Eurotiomycetes</taxon>
        <taxon>Eurotiomycetidae</taxon>
        <taxon>Eurotiales</taxon>
        <taxon>Aspergillaceae</taxon>
        <taxon>Penicillium</taxon>
    </lineage>
</organism>
<keyword id="KW-0121">Carboxypeptidase</keyword>
<keyword id="KW-0903">Direct protein sequencing</keyword>
<keyword id="KW-1015">Disulfide bond</keyword>
<keyword id="KW-0325">Glycoprotein</keyword>
<keyword id="KW-0378">Hydrolase</keyword>
<keyword id="KW-0645">Protease</keyword>
<sequence length="423" mass="46496">FVKNSGICETTPGVNQYSGYLSVGSNMNMWFWFFEARNNPQQAPLAAWFNGGPGCSSMIGLFQENGPCHFVNGDSTPSLNENSWNNYANMIYIDQPIGVGFSYGTDDVTSTVTAAPYVWNLLQAFYAQRPEYESRDFAIFTESYGGHYGPEFASYIEQQNAAIKAGSVTGQNVNIVALGVNNGWIDSTIQEKAYIDFSYNNSYQQIIDSSTRDSLLDAYNNQCLPALQQCSQSGSTSDCTNADSVCYQNIEGPISSSGDFDVYDIREPSNDPYPPKTYSTYLSDPTVVKAIGARTNYQECPNGPYNKFASTGDNPRSFLSTLSSVVQSGINVLVWAGDADWICNWLGNYEVANAVDFPGNAQFSALDLAPYTVNGVEKGQFKTVDNFSFLKVYGAGHEVPYYQPDTALQAFKQIIQKKPISST</sequence>
<protein>
    <recommendedName>
        <fullName>Carboxypeptidase S1</fullName>
        <ecNumber>3.4.16.6</ecNumber>
    </recommendedName>
</protein>
<name>CPS1_PENJA</name>
<accession>P34946</accession>
<comment type="catalytic activity">
    <reaction>
        <text>Preferential release of a C-terminal arginine or lysine residue.</text>
        <dbReference type="EC" id="3.4.16.6"/>
    </reaction>
</comment>
<comment type="similarity">
    <text evidence="3">Belongs to the peptidase S10 family.</text>
</comment>
<feature type="chain" id="PRO_0000120564" description="Carboxypeptidase S1">
    <location>
        <begin position="1"/>
        <end position="423"/>
    </location>
</feature>
<feature type="active site" evidence="2">
    <location>
        <position position="143"/>
    </location>
</feature>
<feature type="active site" evidence="1">
    <location>
        <position position="340"/>
    </location>
</feature>
<feature type="active site" evidence="1">
    <location>
        <position position="397"/>
    </location>
</feature>
<feature type="binding site">
    <location>
        <position position="343"/>
    </location>
    <ligand>
        <name>substrate</name>
    </ligand>
</feature>
<feature type="binding site">
    <location>
        <position position="398"/>
    </location>
    <ligand>
        <name>substrate</name>
    </ligand>
</feature>
<feature type="glycosylation site" description="N-linked (GlcNAc...) asparagine">
    <location>
        <position position="200"/>
    </location>
</feature>
<feature type="disulfide bond">
    <location>
        <begin position="8"/>
        <end position="68"/>
    </location>
</feature>
<feature type="disulfide bond">
    <location>
        <begin position="55"/>
        <end position="300"/>
    </location>
</feature>
<feature type="disulfide bond">
    <location>
        <begin position="223"/>
        <end position="246"/>
    </location>
</feature>
<feature type="disulfide bond">
    <location>
        <begin position="230"/>
        <end position="239"/>
    </location>
</feature>
<proteinExistence type="evidence at protein level"/>
<evidence type="ECO:0000250" key="1"/>
<evidence type="ECO:0000255" key="2"/>
<evidence type="ECO:0000305" key="3"/>